<dbReference type="EC" id="7.1.1.2" evidence="1"/>
<dbReference type="EMBL" id="U83806">
    <property type="protein sequence ID" value="AAB87186.1"/>
    <property type="molecule type" value="Genomic_DNA"/>
</dbReference>
<dbReference type="SMR" id="O21521"/>
<dbReference type="GO" id="GO:0005743">
    <property type="term" value="C:mitochondrial inner membrane"/>
    <property type="evidence" value="ECO:0000250"/>
    <property type="project" value="UniProtKB"/>
</dbReference>
<dbReference type="GO" id="GO:0008137">
    <property type="term" value="F:NADH dehydrogenase (ubiquinone) activity"/>
    <property type="evidence" value="ECO:0000250"/>
    <property type="project" value="UniProtKB"/>
</dbReference>
<dbReference type="GO" id="GO:0048039">
    <property type="term" value="F:ubiquinone binding"/>
    <property type="evidence" value="ECO:0007669"/>
    <property type="project" value="TreeGrafter"/>
</dbReference>
<dbReference type="GO" id="GO:0015990">
    <property type="term" value="P:electron transport coupled proton transport"/>
    <property type="evidence" value="ECO:0007669"/>
    <property type="project" value="TreeGrafter"/>
</dbReference>
<dbReference type="GO" id="GO:0006120">
    <property type="term" value="P:mitochondrial electron transport, NADH to ubiquinone"/>
    <property type="evidence" value="ECO:0000250"/>
    <property type="project" value="UniProtKB"/>
</dbReference>
<dbReference type="GO" id="GO:0032981">
    <property type="term" value="P:mitochondrial respiratory chain complex I assembly"/>
    <property type="evidence" value="ECO:0000250"/>
    <property type="project" value="UniProtKB"/>
</dbReference>
<dbReference type="InterPro" id="IPR000260">
    <property type="entry name" value="NADH4_N"/>
</dbReference>
<dbReference type="InterPro" id="IPR003918">
    <property type="entry name" value="NADH_UbQ_OxRdtase"/>
</dbReference>
<dbReference type="InterPro" id="IPR001750">
    <property type="entry name" value="ND/Mrp_TM"/>
</dbReference>
<dbReference type="PANTHER" id="PTHR43507">
    <property type="entry name" value="NADH-UBIQUINONE OXIDOREDUCTASE CHAIN 4"/>
    <property type="match status" value="1"/>
</dbReference>
<dbReference type="PANTHER" id="PTHR43507:SF20">
    <property type="entry name" value="NADH-UBIQUINONE OXIDOREDUCTASE CHAIN 4"/>
    <property type="match status" value="1"/>
</dbReference>
<dbReference type="Pfam" id="PF01059">
    <property type="entry name" value="Oxidored_q5_N"/>
    <property type="match status" value="1"/>
</dbReference>
<dbReference type="Pfam" id="PF00361">
    <property type="entry name" value="Proton_antipo_M"/>
    <property type="match status" value="1"/>
</dbReference>
<dbReference type="PRINTS" id="PR01437">
    <property type="entry name" value="NUOXDRDTASE4"/>
</dbReference>
<name>NU4M_MICPE</name>
<accession>O21521</accession>
<geneLocation type="mitochondrion"/>
<sequence>MLKIIFPSFMLLPLTWLSSNKKVWINVTTYSLLINLISINLLWQNNENNLSFSTMFSADPLSAPLLVLTTWLLPLMLLASQNHIKKESEHNKKLYISLLVCLQTLLIMTFSANELIMFYILFEATLIPTLIIITRWGNQTERLNAGIYFLFYTLVGSIPLLIALIYIQNWTGTLNLILMTLDSSPINQTWSNNILWLACIMAFMVKMP</sequence>
<organism>
    <name type="scientific">Microtus pennsylvanicus</name>
    <name type="common">Meadow vole</name>
    <dbReference type="NCBI Taxonomy" id="10058"/>
    <lineage>
        <taxon>Eukaryota</taxon>
        <taxon>Metazoa</taxon>
        <taxon>Chordata</taxon>
        <taxon>Craniata</taxon>
        <taxon>Vertebrata</taxon>
        <taxon>Euteleostomi</taxon>
        <taxon>Mammalia</taxon>
        <taxon>Eutheria</taxon>
        <taxon>Euarchontoglires</taxon>
        <taxon>Glires</taxon>
        <taxon>Rodentia</taxon>
        <taxon>Myomorpha</taxon>
        <taxon>Muroidea</taxon>
        <taxon>Cricetidae</taxon>
        <taxon>Arvicolinae</taxon>
        <taxon>Microtus</taxon>
    </lineage>
</organism>
<keyword id="KW-0249">Electron transport</keyword>
<keyword id="KW-0472">Membrane</keyword>
<keyword id="KW-0496">Mitochondrion</keyword>
<keyword id="KW-0999">Mitochondrion inner membrane</keyword>
<keyword id="KW-0520">NAD</keyword>
<keyword id="KW-0679">Respiratory chain</keyword>
<keyword id="KW-1278">Translocase</keyword>
<keyword id="KW-0812">Transmembrane</keyword>
<keyword id="KW-1133">Transmembrane helix</keyword>
<keyword id="KW-0813">Transport</keyword>
<keyword id="KW-0830">Ubiquinone</keyword>
<feature type="chain" id="PRO_0000117955" description="NADH-ubiquinone oxidoreductase chain 4">
    <location>
        <begin position="1"/>
        <end position="208" status="greater than"/>
    </location>
</feature>
<feature type="transmembrane region" description="Helical" evidence="3">
    <location>
        <begin position="23"/>
        <end position="43"/>
    </location>
</feature>
<feature type="transmembrane region" description="Helical" evidence="3">
    <location>
        <begin position="60"/>
        <end position="80"/>
    </location>
</feature>
<feature type="transmembrane region" description="Helical" evidence="3">
    <location>
        <begin position="93"/>
        <end position="113"/>
    </location>
</feature>
<feature type="transmembrane region" description="Helical" evidence="3">
    <location>
        <begin position="114"/>
        <end position="134"/>
    </location>
</feature>
<feature type="transmembrane region" description="Helical" evidence="3">
    <location>
        <begin position="147"/>
        <end position="167"/>
    </location>
</feature>
<feature type="transmembrane region" description="Helical" evidence="3">
    <location>
        <begin position="185"/>
        <end position="205"/>
    </location>
</feature>
<feature type="non-terminal residue">
    <location>
        <position position="208"/>
    </location>
</feature>
<protein>
    <recommendedName>
        <fullName>NADH-ubiquinone oxidoreductase chain 4</fullName>
        <ecNumber evidence="1">7.1.1.2</ecNumber>
    </recommendedName>
    <alternativeName>
        <fullName>NADH dehydrogenase subunit 4</fullName>
    </alternativeName>
</protein>
<comment type="function">
    <text evidence="1">Core subunit of the mitochondrial membrane respiratory chain NADH dehydrogenase (Complex I) which catalyzes electron transfer from NADH through the respiratory chain, using ubiquinone as an electron acceptor. Essential for the catalytic activity and assembly of complex I.</text>
</comment>
<comment type="catalytic activity">
    <reaction evidence="1">
        <text>a ubiquinone + NADH + 5 H(+)(in) = a ubiquinol + NAD(+) + 4 H(+)(out)</text>
        <dbReference type="Rhea" id="RHEA:29091"/>
        <dbReference type="Rhea" id="RHEA-COMP:9565"/>
        <dbReference type="Rhea" id="RHEA-COMP:9566"/>
        <dbReference type="ChEBI" id="CHEBI:15378"/>
        <dbReference type="ChEBI" id="CHEBI:16389"/>
        <dbReference type="ChEBI" id="CHEBI:17976"/>
        <dbReference type="ChEBI" id="CHEBI:57540"/>
        <dbReference type="ChEBI" id="CHEBI:57945"/>
        <dbReference type="EC" id="7.1.1.2"/>
    </reaction>
</comment>
<comment type="subunit">
    <text evidence="2">Core subunit of respiratory chain NADH dehydrogenase (Complex I) which is composed of 45 different subunits.</text>
</comment>
<comment type="subcellular location">
    <subcellularLocation>
        <location evidence="2">Mitochondrion inner membrane</location>
        <topology evidence="3">Multi-pass membrane protein</topology>
    </subcellularLocation>
</comment>
<comment type="similarity">
    <text evidence="4">Belongs to the complex I subunit 4 family.</text>
</comment>
<reference key="1">
    <citation type="journal article" date="1998" name="Mol. Biol. Evol.">
        <title>Molecular systematics and paleobiogeography of the South American sigmodontine rodents.</title>
        <authorList>
            <person name="Engel S.R."/>
            <person name="Hogan K.M."/>
            <person name="Taylor J.F."/>
            <person name="Davis S.K."/>
        </authorList>
    </citation>
    <scope>NUCLEOTIDE SEQUENCE [GENOMIC DNA]</scope>
</reference>
<evidence type="ECO:0000250" key="1">
    <source>
        <dbReference type="UniProtKB" id="P03905"/>
    </source>
</evidence>
<evidence type="ECO:0000250" key="2">
    <source>
        <dbReference type="UniProtKB" id="P03910"/>
    </source>
</evidence>
<evidence type="ECO:0000255" key="3"/>
<evidence type="ECO:0000305" key="4"/>
<proteinExistence type="inferred from homology"/>
<gene>
    <name type="primary">MT-ND4</name>
    <name type="synonym">MTND4</name>
    <name type="synonym">NADH4</name>
    <name type="synonym">ND4</name>
</gene>